<proteinExistence type="inferred from homology"/>
<comment type="function">
    <text evidence="1">Component of the COP9 signalosome complex (CSN), a complex involved in various cellular and developmental processes. The CSN complex is an essential regulator of the ubiquitin (Ubl) conjugation pathway by mediating the deneddylation of the cullin subunits of SCF-type E3 ligase complexes, leading to decrease the Ubl ligase activity. May play a role in cell proliferation.</text>
</comment>
<comment type="subunit">
    <text evidence="1">Component of the CSN complex, probably composed of cops1, cops2, cops3, cops4, cops5, cops6, cops7, cops8 and cops9.</text>
</comment>
<comment type="subcellular location">
    <subcellularLocation>
        <location evidence="1">Nucleus</location>
    </subcellularLocation>
    <subcellularLocation>
        <location evidence="1">Cytoplasm</location>
    </subcellularLocation>
    <subcellularLocation>
        <location evidence="1">Nucleus</location>
        <location evidence="1">Nucleoplasm</location>
    </subcellularLocation>
</comment>
<comment type="similarity">
    <text evidence="2">Belongs to the CSN9 family.</text>
</comment>
<accession>A1L3P1</accession>
<keyword id="KW-0963">Cytoplasm</keyword>
<keyword id="KW-0539">Nucleus</keyword>
<keyword id="KW-1185">Reference proteome</keyword>
<keyword id="KW-0736">Signalosome</keyword>
<dbReference type="EMBL" id="BC130217">
    <property type="protein sequence ID" value="AAI30218.1"/>
    <property type="molecule type" value="mRNA"/>
</dbReference>
<dbReference type="RefSeq" id="NP_001165255.1">
    <property type="nucleotide sequence ID" value="NM_001171784.1"/>
</dbReference>
<dbReference type="DNASU" id="100037056"/>
<dbReference type="GeneID" id="100037056"/>
<dbReference type="KEGG" id="xla:100037056"/>
<dbReference type="AGR" id="Xenbase:XB-GENE-6255530"/>
<dbReference type="CTD" id="100037056"/>
<dbReference type="Xenbase" id="XB-GENE-6255530">
    <property type="gene designation" value="cops9.S"/>
</dbReference>
<dbReference type="OrthoDB" id="9972368at2759"/>
<dbReference type="Proteomes" id="UP000186698">
    <property type="component" value="Chromosome 5S"/>
</dbReference>
<dbReference type="Bgee" id="100037056">
    <property type="expression patterns" value="Expressed in internal ear and 19 other cell types or tissues"/>
</dbReference>
<dbReference type="GO" id="GO:0000785">
    <property type="term" value="C:chromatin"/>
    <property type="evidence" value="ECO:0000250"/>
    <property type="project" value="UniProtKB"/>
</dbReference>
<dbReference type="GO" id="GO:0008180">
    <property type="term" value="C:COP9 signalosome"/>
    <property type="evidence" value="ECO:0000250"/>
    <property type="project" value="UniProtKB"/>
</dbReference>
<dbReference type="GO" id="GO:0005737">
    <property type="term" value="C:cytoplasm"/>
    <property type="evidence" value="ECO:0000250"/>
    <property type="project" value="UniProtKB"/>
</dbReference>
<dbReference type="GO" id="GO:0005654">
    <property type="term" value="C:nucleoplasm"/>
    <property type="evidence" value="ECO:0000250"/>
    <property type="project" value="UniProtKB"/>
</dbReference>
<dbReference type="GO" id="GO:0005634">
    <property type="term" value="C:nucleus"/>
    <property type="evidence" value="ECO:0000250"/>
    <property type="project" value="UniProtKB"/>
</dbReference>
<dbReference type="GO" id="GO:0034644">
    <property type="term" value="P:cellular response to UV"/>
    <property type="evidence" value="ECO:0000250"/>
    <property type="project" value="UniProtKB"/>
</dbReference>
<dbReference type="GO" id="GO:0008284">
    <property type="term" value="P:positive regulation of cell population proliferation"/>
    <property type="evidence" value="ECO:0000250"/>
    <property type="project" value="UniProtKB"/>
</dbReference>
<dbReference type="InterPro" id="IPR029391">
    <property type="entry name" value="CSN9_metazoa"/>
</dbReference>
<dbReference type="PANTHER" id="PTHR28562">
    <property type="entry name" value="COP9 SIGNALOSOME COMPLEX SUBUNIT 9"/>
    <property type="match status" value="1"/>
</dbReference>
<dbReference type="Pfam" id="PF15004">
    <property type="entry name" value="MYEOV2"/>
    <property type="match status" value="1"/>
</dbReference>
<name>CSN9_XENLA</name>
<organism>
    <name type="scientific">Xenopus laevis</name>
    <name type="common">African clawed frog</name>
    <dbReference type="NCBI Taxonomy" id="8355"/>
    <lineage>
        <taxon>Eukaryota</taxon>
        <taxon>Metazoa</taxon>
        <taxon>Chordata</taxon>
        <taxon>Craniata</taxon>
        <taxon>Vertebrata</taxon>
        <taxon>Euteleostomi</taxon>
        <taxon>Amphibia</taxon>
        <taxon>Batrachia</taxon>
        <taxon>Anura</taxon>
        <taxon>Pipoidea</taxon>
        <taxon>Pipidae</taxon>
        <taxon>Xenopodinae</taxon>
        <taxon>Xenopus</taxon>
        <taxon>Xenopus</taxon>
    </lineage>
</organism>
<reference key="1">
    <citation type="submission" date="2006-12" db="EMBL/GenBank/DDBJ databases">
        <authorList>
            <consortium name="NIH - Xenopus Gene Collection (XGC) project"/>
        </authorList>
    </citation>
    <scope>NUCLEOTIDE SEQUENCE [LARGE SCALE MRNA]</scope>
    <source>
        <tissue>Testis</tissue>
    </source>
</reference>
<feature type="chain" id="PRO_0000332927" description="COP9 signalosome complex subunit 9">
    <location>
        <begin position="1"/>
        <end position="57"/>
    </location>
</feature>
<gene>
    <name evidence="1" type="primary">cops9</name>
    <name type="synonym">myeov2</name>
</gene>
<sequence length="57" mass="6212">MKPAVDEMFPEGAGPYVDLDEAGGSSGLLMDLAADEKAVHADFFNDFEDLFDDEDIQ</sequence>
<protein>
    <recommendedName>
        <fullName evidence="2">COP9 signalosome complex subunit 9</fullName>
    </recommendedName>
</protein>
<evidence type="ECO:0000250" key="1">
    <source>
        <dbReference type="UniProtKB" id="Q8WXC6"/>
    </source>
</evidence>
<evidence type="ECO:0000305" key="2"/>